<proteinExistence type="inferred from homology"/>
<feature type="chain" id="PRO_1000059245" description="Phenylalanine--tRNA ligase alpha subunit">
    <location>
        <begin position="1"/>
        <end position="347"/>
    </location>
</feature>
<feature type="binding site" evidence="1">
    <location>
        <position position="262"/>
    </location>
    <ligand>
        <name>Mg(2+)</name>
        <dbReference type="ChEBI" id="CHEBI:18420"/>
        <note>shared with beta subunit</note>
    </ligand>
</feature>
<name>SYFA_ROSS1</name>
<sequence>MSLIDQLNQLEYEALAALEQIADLTALAEWKSAYLGKQGALSRLSRGLGALPAEERPVAGARFNAARATLEQALERAEAQLKRIARQHAFEADQVDVTLPGRAPAVGRLHPTTQMLRTIYGILGEMGFQVWESPEVETDEFNFQLLNMPPDHPARDMWDTFYVETAPGEPTLLLRTHTSPGQIYAMRANAPNPVRAILPGKCYRYEQVTARHEMQFYQVEGIAIGEQISFSDLKGTLVAFAERLYGKGVKTRFRPSYFPFTEPSVEFDIECFLCGGAGCRVCKQSGWLEILGAGMIHPVVLRNGGYDPDTVSGFAFGMGPERMAMLRYGIDDIRWFFSGDERFLQQF</sequence>
<protein>
    <recommendedName>
        <fullName evidence="1">Phenylalanine--tRNA ligase alpha subunit</fullName>
        <ecNumber evidence="1">6.1.1.20</ecNumber>
    </recommendedName>
    <alternativeName>
        <fullName evidence="1">Phenylalanyl-tRNA synthetase alpha subunit</fullName>
        <shortName evidence="1">PheRS</shortName>
    </alternativeName>
</protein>
<reference key="1">
    <citation type="submission" date="2007-04" db="EMBL/GenBank/DDBJ databases">
        <title>Complete sequence of Roseiflexus sp. RS-1.</title>
        <authorList>
            <consortium name="US DOE Joint Genome Institute"/>
            <person name="Copeland A."/>
            <person name="Lucas S."/>
            <person name="Lapidus A."/>
            <person name="Barry K."/>
            <person name="Detter J.C."/>
            <person name="Glavina del Rio T."/>
            <person name="Hammon N."/>
            <person name="Israni S."/>
            <person name="Dalin E."/>
            <person name="Tice H."/>
            <person name="Pitluck S."/>
            <person name="Chertkov O."/>
            <person name="Brettin T."/>
            <person name="Bruce D."/>
            <person name="Han C."/>
            <person name="Schmutz J."/>
            <person name="Larimer F."/>
            <person name="Land M."/>
            <person name="Hauser L."/>
            <person name="Kyrpides N."/>
            <person name="Mikhailova N."/>
            <person name="Bryant D.A."/>
            <person name="Richardson P."/>
        </authorList>
    </citation>
    <scope>NUCLEOTIDE SEQUENCE [LARGE SCALE GENOMIC DNA]</scope>
    <source>
        <strain>RS-1</strain>
    </source>
</reference>
<evidence type="ECO:0000255" key="1">
    <source>
        <dbReference type="HAMAP-Rule" id="MF_00281"/>
    </source>
</evidence>
<gene>
    <name evidence="1" type="primary">pheS</name>
    <name type="ordered locus">RoseRS_1036</name>
</gene>
<keyword id="KW-0030">Aminoacyl-tRNA synthetase</keyword>
<keyword id="KW-0067">ATP-binding</keyword>
<keyword id="KW-0963">Cytoplasm</keyword>
<keyword id="KW-0436">Ligase</keyword>
<keyword id="KW-0460">Magnesium</keyword>
<keyword id="KW-0479">Metal-binding</keyword>
<keyword id="KW-0547">Nucleotide-binding</keyword>
<keyword id="KW-0648">Protein biosynthesis</keyword>
<comment type="catalytic activity">
    <reaction evidence="1">
        <text>tRNA(Phe) + L-phenylalanine + ATP = L-phenylalanyl-tRNA(Phe) + AMP + diphosphate + H(+)</text>
        <dbReference type="Rhea" id="RHEA:19413"/>
        <dbReference type="Rhea" id="RHEA-COMP:9668"/>
        <dbReference type="Rhea" id="RHEA-COMP:9699"/>
        <dbReference type="ChEBI" id="CHEBI:15378"/>
        <dbReference type="ChEBI" id="CHEBI:30616"/>
        <dbReference type="ChEBI" id="CHEBI:33019"/>
        <dbReference type="ChEBI" id="CHEBI:58095"/>
        <dbReference type="ChEBI" id="CHEBI:78442"/>
        <dbReference type="ChEBI" id="CHEBI:78531"/>
        <dbReference type="ChEBI" id="CHEBI:456215"/>
        <dbReference type="EC" id="6.1.1.20"/>
    </reaction>
</comment>
<comment type="cofactor">
    <cofactor evidence="1">
        <name>Mg(2+)</name>
        <dbReference type="ChEBI" id="CHEBI:18420"/>
    </cofactor>
    <text evidence="1">Binds 2 magnesium ions per tetramer.</text>
</comment>
<comment type="subunit">
    <text evidence="1">Tetramer of two alpha and two beta subunits.</text>
</comment>
<comment type="subcellular location">
    <subcellularLocation>
        <location evidence="1">Cytoplasm</location>
    </subcellularLocation>
</comment>
<comment type="similarity">
    <text evidence="1">Belongs to the class-II aminoacyl-tRNA synthetase family. Phe-tRNA synthetase alpha subunit type 1 subfamily.</text>
</comment>
<dbReference type="EC" id="6.1.1.20" evidence="1"/>
<dbReference type="EMBL" id="CP000686">
    <property type="protein sequence ID" value="ABQ89445.1"/>
    <property type="molecule type" value="Genomic_DNA"/>
</dbReference>
<dbReference type="RefSeq" id="WP_011955798.1">
    <property type="nucleotide sequence ID" value="NC_009523.1"/>
</dbReference>
<dbReference type="SMR" id="A5US42"/>
<dbReference type="STRING" id="357808.RoseRS_1036"/>
<dbReference type="KEGG" id="rrs:RoseRS_1036"/>
<dbReference type="eggNOG" id="COG0016">
    <property type="taxonomic scope" value="Bacteria"/>
</dbReference>
<dbReference type="HOGENOM" id="CLU_025086_0_1_0"/>
<dbReference type="OrthoDB" id="9800719at2"/>
<dbReference type="Proteomes" id="UP000006554">
    <property type="component" value="Chromosome"/>
</dbReference>
<dbReference type="GO" id="GO:0005737">
    <property type="term" value="C:cytoplasm"/>
    <property type="evidence" value="ECO:0007669"/>
    <property type="project" value="UniProtKB-SubCell"/>
</dbReference>
<dbReference type="GO" id="GO:0005524">
    <property type="term" value="F:ATP binding"/>
    <property type="evidence" value="ECO:0007669"/>
    <property type="project" value="UniProtKB-UniRule"/>
</dbReference>
<dbReference type="GO" id="GO:0000287">
    <property type="term" value="F:magnesium ion binding"/>
    <property type="evidence" value="ECO:0007669"/>
    <property type="project" value="UniProtKB-UniRule"/>
</dbReference>
<dbReference type="GO" id="GO:0004826">
    <property type="term" value="F:phenylalanine-tRNA ligase activity"/>
    <property type="evidence" value="ECO:0007669"/>
    <property type="project" value="UniProtKB-UniRule"/>
</dbReference>
<dbReference type="GO" id="GO:0000049">
    <property type="term" value="F:tRNA binding"/>
    <property type="evidence" value="ECO:0007669"/>
    <property type="project" value="InterPro"/>
</dbReference>
<dbReference type="GO" id="GO:0006432">
    <property type="term" value="P:phenylalanyl-tRNA aminoacylation"/>
    <property type="evidence" value="ECO:0007669"/>
    <property type="project" value="UniProtKB-UniRule"/>
</dbReference>
<dbReference type="CDD" id="cd00496">
    <property type="entry name" value="PheRS_alpha_core"/>
    <property type="match status" value="1"/>
</dbReference>
<dbReference type="Gene3D" id="3.30.930.10">
    <property type="entry name" value="Bira Bifunctional Protein, Domain 2"/>
    <property type="match status" value="1"/>
</dbReference>
<dbReference type="HAMAP" id="MF_00281">
    <property type="entry name" value="Phe_tRNA_synth_alpha1"/>
    <property type="match status" value="1"/>
</dbReference>
<dbReference type="InterPro" id="IPR006195">
    <property type="entry name" value="aa-tRNA-synth_II"/>
</dbReference>
<dbReference type="InterPro" id="IPR045864">
    <property type="entry name" value="aa-tRNA-synth_II/BPL/LPL"/>
</dbReference>
<dbReference type="InterPro" id="IPR004529">
    <property type="entry name" value="Phe-tRNA-synth_IIc_asu"/>
</dbReference>
<dbReference type="InterPro" id="IPR004188">
    <property type="entry name" value="Phe-tRNA_ligase_II_N"/>
</dbReference>
<dbReference type="InterPro" id="IPR022911">
    <property type="entry name" value="Phe_tRNA_ligase_alpha1_bac"/>
</dbReference>
<dbReference type="InterPro" id="IPR002319">
    <property type="entry name" value="Phenylalanyl-tRNA_Synthase"/>
</dbReference>
<dbReference type="InterPro" id="IPR010978">
    <property type="entry name" value="tRNA-bd_arm"/>
</dbReference>
<dbReference type="NCBIfam" id="TIGR00468">
    <property type="entry name" value="pheS"/>
    <property type="match status" value="1"/>
</dbReference>
<dbReference type="PANTHER" id="PTHR11538:SF41">
    <property type="entry name" value="PHENYLALANINE--TRNA LIGASE, MITOCHONDRIAL"/>
    <property type="match status" value="1"/>
</dbReference>
<dbReference type="PANTHER" id="PTHR11538">
    <property type="entry name" value="PHENYLALANYL-TRNA SYNTHETASE"/>
    <property type="match status" value="1"/>
</dbReference>
<dbReference type="Pfam" id="PF02912">
    <property type="entry name" value="Phe_tRNA-synt_N"/>
    <property type="match status" value="1"/>
</dbReference>
<dbReference type="Pfam" id="PF01409">
    <property type="entry name" value="tRNA-synt_2d"/>
    <property type="match status" value="1"/>
</dbReference>
<dbReference type="SUPFAM" id="SSF55681">
    <property type="entry name" value="Class II aaRS and biotin synthetases"/>
    <property type="match status" value="1"/>
</dbReference>
<dbReference type="SUPFAM" id="SSF46589">
    <property type="entry name" value="tRNA-binding arm"/>
    <property type="match status" value="1"/>
</dbReference>
<dbReference type="PROSITE" id="PS50862">
    <property type="entry name" value="AA_TRNA_LIGASE_II"/>
    <property type="match status" value="1"/>
</dbReference>
<organism>
    <name type="scientific">Roseiflexus sp. (strain RS-1)</name>
    <dbReference type="NCBI Taxonomy" id="357808"/>
    <lineage>
        <taxon>Bacteria</taxon>
        <taxon>Bacillati</taxon>
        <taxon>Chloroflexota</taxon>
        <taxon>Chloroflexia</taxon>
        <taxon>Chloroflexales</taxon>
        <taxon>Roseiflexineae</taxon>
        <taxon>Roseiflexaceae</taxon>
        <taxon>Roseiflexus</taxon>
    </lineage>
</organism>
<accession>A5US42</accession>